<protein>
    <recommendedName>
        <fullName evidence="1">Elongation factor 4</fullName>
        <shortName evidence="1">EF-4</shortName>
        <ecNumber evidence="1">3.6.5.n1</ecNumber>
    </recommendedName>
    <alternativeName>
        <fullName evidence="1">Ribosomal back-translocase LepA</fullName>
    </alternativeName>
</protein>
<keyword id="KW-0997">Cell inner membrane</keyword>
<keyword id="KW-1003">Cell membrane</keyword>
<keyword id="KW-0342">GTP-binding</keyword>
<keyword id="KW-0378">Hydrolase</keyword>
<keyword id="KW-0472">Membrane</keyword>
<keyword id="KW-0547">Nucleotide-binding</keyword>
<keyword id="KW-0648">Protein biosynthesis</keyword>
<keyword id="KW-1185">Reference proteome</keyword>
<evidence type="ECO:0000255" key="1">
    <source>
        <dbReference type="HAMAP-Rule" id="MF_00071"/>
    </source>
</evidence>
<feature type="chain" id="PRO_1000057476" description="Elongation factor 4">
    <location>
        <begin position="1"/>
        <end position="598"/>
    </location>
</feature>
<feature type="domain" description="tr-type G">
    <location>
        <begin position="4"/>
        <end position="186"/>
    </location>
</feature>
<feature type="binding site" evidence="1">
    <location>
        <begin position="16"/>
        <end position="21"/>
    </location>
    <ligand>
        <name>GTP</name>
        <dbReference type="ChEBI" id="CHEBI:37565"/>
    </ligand>
</feature>
<feature type="binding site" evidence="1">
    <location>
        <begin position="133"/>
        <end position="136"/>
    </location>
    <ligand>
        <name>GTP</name>
        <dbReference type="ChEBI" id="CHEBI:37565"/>
    </ligand>
</feature>
<proteinExistence type="inferred from homology"/>
<dbReference type="EC" id="3.6.5.n1" evidence="1"/>
<dbReference type="EMBL" id="CP000471">
    <property type="protein sequence ID" value="ABK43424.1"/>
    <property type="molecule type" value="Genomic_DNA"/>
</dbReference>
<dbReference type="RefSeq" id="WP_011712581.1">
    <property type="nucleotide sequence ID" value="NC_008576.1"/>
</dbReference>
<dbReference type="SMR" id="A0L631"/>
<dbReference type="STRING" id="156889.Mmc1_0905"/>
<dbReference type="KEGG" id="mgm:Mmc1_0905"/>
<dbReference type="eggNOG" id="COG0481">
    <property type="taxonomic scope" value="Bacteria"/>
</dbReference>
<dbReference type="HOGENOM" id="CLU_009995_3_3_5"/>
<dbReference type="OrthoDB" id="9802948at2"/>
<dbReference type="Proteomes" id="UP000002586">
    <property type="component" value="Chromosome"/>
</dbReference>
<dbReference type="GO" id="GO:0005886">
    <property type="term" value="C:plasma membrane"/>
    <property type="evidence" value="ECO:0007669"/>
    <property type="project" value="UniProtKB-SubCell"/>
</dbReference>
<dbReference type="GO" id="GO:0005525">
    <property type="term" value="F:GTP binding"/>
    <property type="evidence" value="ECO:0007669"/>
    <property type="project" value="UniProtKB-UniRule"/>
</dbReference>
<dbReference type="GO" id="GO:0003924">
    <property type="term" value="F:GTPase activity"/>
    <property type="evidence" value="ECO:0007669"/>
    <property type="project" value="UniProtKB-UniRule"/>
</dbReference>
<dbReference type="GO" id="GO:0097216">
    <property type="term" value="F:guanosine tetraphosphate binding"/>
    <property type="evidence" value="ECO:0007669"/>
    <property type="project" value="UniProtKB-ARBA"/>
</dbReference>
<dbReference type="GO" id="GO:0043022">
    <property type="term" value="F:ribosome binding"/>
    <property type="evidence" value="ECO:0007669"/>
    <property type="project" value="UniProtKB-UniRule"/>
</dbReference>
<dbReference type="GO" id="GO:0003746">
    <property type="term" value="F:translation elongation factor activity"/>
    <property type="evidence" value="ECO:0007669"/>
    <property type="project" value="UniProtKB-UniRule"/>
</dbReference>
<dbReference type="GO" id="GO:0045727">
    <property type="term" value="P:positive regulation of translation"/>
    <property type="evidence" value="ECO:0007669"/>
    <property type="project" value="UniProtKB-UniRule"/>
</dbReference>
<dbReference type="CDD" id="cd03699">
    <property type="entry name" value="EF4_II"/>
    <property type="match status" value="1"/>
</dbReference>
<dbReference type="CDD" id="cd16260">
    <property type="entry name" value="EF4_III"/>
    <property type="match status" value="1"/>
</dbReference>
<dbReference type="CDD" id="cd01890">
    <property type="entry name" value="LepA"/>
    <property type="match status" value="1"/>
</dbReference>
<dbReference type="CDD" id="cd03709">
    <property type="entry name" value="lepA_C"/>
    <property type="match status" value="1"/>
</dbReference>
<dbReference type="FunFam" id="3.40.50.300:FF:000078">
    <property type="entry name" value="Elongation factor 4"/>
    <property type="match status" value="1"/>
</dbReference>
<dbReference type="FunFam" id="2.40.30.10:FF:000015">
    <property type="entry name" value="Translation factor GUF1, mitochondrial"/>
    <property type="match status" value="1"/>
</dbReference>
<dbReference type="FunFam" id="3.30.70.240:FF:000007">
    <property type="entry name" value="Translation factor GUF1, mitochondrial"/>
    <property type="match status" value="1"/>
</dbReference>
<dbReference type="FunFam" id="3.30.70.2570:FF:000001">
    <property type="entry name" value="Translation factor GUF1, mitochondrial"/>
    <property type="match status" value="1"/>
</dbReference>
<dbReference type="FunFam" id="3.30.70.870:FF:000004">
    <property type="entry name" value="Translation factor GUF1, mitochondrial"/>
    <property type="match status" value="1"/>
</dbReference>
<dbReference type="Gene3D" id="3.30.70.240">
    <property type="match status" value="1"/>
</dbReference>
<dbReference type="Gene3D" id="3.30.70.2570">
    <property type="entry name" value="Elongation factor 4, C-terminal domain"/>
    <property type="match status" value="1"/>
</dbReference>
<dbReference type="Gene3D" id="3.30.70.870">
    <property type="entry name" value="Elongation Factor G (Translational Gtpase), domain 3"/>
    <property type="match status" value="1"/>
</dbReference>
<dbReference type="Gene3D" id="3.40.50.300">
    <property type="entry name" value="P-loop containing nucleotide triphosphate hydrolases"/>
    <property type="match status" value="1"/>
</dbReference>
<dbReference type="Gene3D" id="2.40.30.10">
    <property type="entry name" value="Translation factors"/>
    <property type="match status" value="1"/>
</dbReference>
<dbReference type="HAMAP" id="MF_00071">
    <property type="entry name" value="LepA"/>
    <property type="match status" value="1"/>
</dbReference>
<dbReference type="InterPro" id="IPR006297">
    <property type="entry name" value="EF-4"/>
</dbReference>
<dbReference type="InterPro" id="IPR035647">
    <property type="entry name" value="EFG_III/V"/>
</dbReference>
<dbReference type="InterPro" id="IPR000640">
    <property type="entry name" value="EFG_V-like"/>
</dbReference>
<dbReference type="InterPro" id="IPR004161">
    <property type="entry name" value="EFTu-like_2"/>
</dbReference>
<dbReference type="InterPro" id="IPR031157">
    <property type="entry name" value="G_TR_CS"/>
</dbReference>
<dbReference type="InterPro" id="IPR038363">
    <property type="entry name" value="LepA_C_sf"/>
</dbReference>
<dbReference type="InterPro" id="IPR013842">
    <property type="entry name" value="LepA_CTD"/>
</dbReference>
<dbReference type="InterPro" id="IPR035654">
    <property type="entry name" value="LepA_IV"/>
</dbReference>
<dbReference type="InterPro" id="IPR027417">
    <property type="entry name" value="P-loop_NTPase"/>
</dbReference>
<dbReference type="InterPro" id="IPR005225">
    <property type="entry name" value="Small_GTP-bd"/>
</dbReference>
<dbReference type="InterPro" id="IPR000795">
    <property type="entry name" value="T_Tr_GTP-bd_dom"/>
</dbReference>
<dbReference type="InterPro" id="IPR009000">
    <property type="entry name" value="Transl_B-barrel_sf"/>
</dbReference>
<dbReference type="NCBIfam" id="TIGR01393">
    <property type="entry name" value="lepA"/>
    <property type="match status" value="1"/>
</dbReference>
<dbReference type="NCBIfam" id="TIGR00231">
    <property type="entry name" value="small_GTP"/>
    <property type="match status" value="1"/>
</dbReference>
<dbReference type="PANTHER" id="PTHR43512:SF4">
    <property type="entry name" value="TRANSLATION FACTOR GUF1 HOMOLOG, CHLOROPLASTIC"/>
    <property type="match status" value="1"/>
</dbReference>
<dbReference type="PANTHER" id="PTHR43512">
    <property type="entry name" value="TRANSLATION FACTOR GUF1-RELATED"/>
    <property type="match status" value="1"/>
</dbReference>
<dbReference type="Pfam" id="PF00679">
    <property type="entry name" value="EFG_C"/>
    <property type="match status" value="1"/>
</dbReference>
<dbReference type="Pfam" id="PF00009">
    <property type="entry name" value="GTP_EFTU"/>
    <property type="match status" value="1"/>
</dbReference>
<dbReference type="Pfam" id="PF03144">
    <property type="entry name" value="GTP_EFTU_D2"/>
    <property type="match status" value="1"/>
</dbReference>
<dbReference type="Pfam" id="PF06421">
    <property type="entry name" value="LepA_C"/>
    <property type="match status" value="1"/>
</dbReference>
<dbReference type="PRINTS" id="PR00315">
    <property type="entry name" value="ELONGATNFCT"/>
</dbReference>
<dbReference type="SUPFAM" id="SSF54980">
    <property type="entry name" value="EF-G C-terminal domain-like"/>
    <property type="match status" value="2"/>
</dbReference>
<dbReference type="SUPFAM" id="SSF52540">
    <property type="entry name" value="P-loop containing nucleoside triphosphate hydrolases"/>
    <property type="match status" value="1"/>
</dbReference>
<dbReference type="SUPFAM" id="SSF50447">
    <property type="entry name" value="Translation proteins"/>
    <property type="match status" value="1"/>
</dbReference>
<dbReference type="PROSITE" id="PS00301">
    <property type="entry name" value="G_TR_1"/>
    <property type="match status" value="1"/>
</dbReference>
<dbReference type="PROSITE" id="PS51722">
    <property type="entry name" value="G_TR_2"/>
    <property type="match status" value="1"/>
</dbReference>
<organism>
    <name type="scientific">Magnetococcus marinus (strain ATCC BAA-1437 / JCM 17883 / MC-1)</name>
    <dbReference type="NCBI Taxonomy" id="156889"/>
    <lineage>
        <taxon>Bacteria</taxon>
        <taxon>Pseudomonadati</taxon>
        <taxon>Pseudomonadota</taxon>
        <taxon>Alphaproteobacteria</taxon>
        <taxon>Magnetococcales</taxon>
        <taxon>Magnetococcaceae</taxon>
        <taxon>Magnetococcus</taxon>
    </lineage>
</organism>
<name>LEPA_MAGMM</name>
<gene>
    <name evidence="1" type="primary">lepA</name>
    <name type="ordered locus">Mmc1_0905</name>
</gene>
<comment type="function">
    <text evidence="1">Required for accurate and efficient protein synthesis under certain stress conditions. May act as a fidelity factor of the translation reaction, by catalyzing a one-codon backward translocation of tRNAs on improperly translocated ribosomes. Back-translocation proceeds from a post-translocation (POST) complex to a pre-translocation (PRE) complex, thus giving elongation factor G a second chance to translocate the tRNAs correctly. Binds to ribosomes in a GTP-dependent manner.</text>
</comment>
<comment type="catalytic activity">
    <reaction evidence="1">
        <text>GTP + H2O = GDP + phosphate + H(+)</text>
        <dbReference type="Rhea" id="RHEA:19669"/>
        <dbReference type="ChEBI" id="CHEBI:15377"/>
        <dbReference type="ChEBI" id="CHEBI:15378"/>
        <dbReference type="ChEBI" id="CHEBI:37565"/>
        <dbReference type="ChEBI" id="CHEBI:43474"/>
        <dbReference type="ChEBI" id="CHEBI:58189"/>
        <dbReference type="EC" id="3.6.5.n1"/>
    </reaction>
</comment>
<comment type="subcellular location">
    <subcellularLocation>
        <location evidence="1">Cell inner membrane</location>
        <topology evidence="1">Peripheral membrane protein</topology>
        <orientation evidence="1">Cytoplasmic side</orientation>
    </subcellularLocation>
</comment>
<comment type="similarity">
    <text evidence="1">Belongs to the TRAFAC class translation factor GTPase superfamily. Classic translation factor GTPase family. LepA subfamily.</text>
</comment>
<reference key="1">
    <citation type="journal article" date="2009" name="Appl. Environ. Microbiol.">
        <title>Complete genome sequence of the chemolithoautotrophic marine magnetotactic coccus strain MC-1.</title>
        <authorList>
            <person name="Schubbe S."/>
            <person name="Williams T.J."/>
            <person name="Xie G."/>
            <person name="Kiss H.E."/>
            <person name="Brettin T.S."/>
            <person name="Martinez D."/>
            <person name="Ross C.A."/>
            <person name="Schuler D."/>
            <person name="Cox B.L."/>
            <person name="Nealson K.H."/>
            <person name="Bazylinski D.A."/>
        </authorList>
    </citation>
    <scope>NUCLEOTIDE SEQUENCE [LARGE SCALE GENOMIC DNA]</scope>
    <source>
        <strain>ATCC BAA-1437 / JCM 17883 / MC-1</strain>
    </source>
</reference>
<sequence>MSLDHIRNFSIIAHIDHGKSTLADRLIQFTGALSERDMKEQVLDSMDIERERGITIKAQSVRLNYKAKDGKTYVLNLIDTPGHVDFTYEVSRSLAACEGALLIVDAAQGVEAQTMANVYLALEHDLEIIPVLNKIDLPSAEPERVREQIEEVIGLDASEAILASAKSGIGIEEILEAIVKRVPPPKGDLDAPAKALVVDSWYDNYLGVVSLARVYDGVLKAGEKIRFMGVGMDYPLDNVGFLTPVLTKVAELKAGEVGCIMAGIKKLSDARVGDTITTVRRPCASQLPGFQPAKSMVFAGLYPVDSADYEDLKDALEKLAINDASLNYEVETSPALGFGFRCGFLGMLHMEIIQERLEREFDLDLVTTAPTVVYRVKQTDGQIMDIRSPGDLPPTTKREYIEEPYILANIMVPAEYMGPVMQLCTDRRGTQKDMSYISDTRVMVQYEMPMSEVVMDFFDRLKSMTKGYASLDYHLLDYRMSDLVKLDILINGDPVDALSVIVHRNISQYRGRELAKKMKELIHRQMFDVAVQACIGGKIIARETVKALRKNVTAKCYGGDITRKRKLLEKQKAGKKRMKQVGKVEIPQEAFLAVLKVD</sequence>
<accession>A0L631</accession>